<sequence length="91" mass="10899">MSRTIFCTYLQRDAEGQDFQLYPGELGKRIYNEISKDAWAQWQHKQTMLINEKKLNMMNAEHRKLLEQEMVSFLFEGKDVHIEGYTPEDKK</sequence>
<reference key="1">
    <citation type="journal article" date="2011" name="J. Bacteriol.">
        <title>Comparative genomics of 28 Salmonella enterica isolates: evidence for CRISPR-mediated adaptive sublineage evolution.</title>
        <authorList>
            <person name="Fricke W.F."/>
            <person name="Mammel M.K."/>
            <person name="McDermott P.F."/>
            <person name="Tartera C."/>
            <person name="White D.G."/>
            <person name="Leclerc J.E."/>
            <person name="Ravel J."/>
            <person name="Cebula T.A."/>
        </authorList>
    </citation>
    <scope>NUCLEOTIDE SEQUENCE [LARGE SCALE GENOMIC DNA]</scope>
    <source>
        <strain>SL254</strain>
    </source>
</reference>
<organism>
    <name type="scientific">Salmonella newport (strain SL254)</name>
    <dbReference type="NCBI Taxonomy" id="423368"/>
    <lineage>
        <taxon>Bacteria</taxon>
        <taxon>Pseudomonadati</taxon>
        <taxon>Pseudomonadota</taxon>
        <taxon>Gammaproteobacteria</taxon>
        <taxon>Enterobacterales</taxon>
        <taxon>Enterobacteriaceae</taxon>
        <taxon>Salmonella</taxon>
    </lineage>
</organism>
<dbReference type="EMBL" id="CP001113">
    <property type="protein sequence ID" value="ACF64166.1"/>
    <property type="molecule type" value="Genomic_DNA"/>
</dbReference>
<dbReference type="RefSeq" id="WP_000091706.1">
    <property type="nucleotide sequence ID" value="NZ_CCMR01000001.1"/>
</dbReference>
<dbReference type="BMRB" id="B4T5L9"/>
<dbReference type="SMR" id="B4T5L9"/>
<dbReference type="KEGG" id="see:SNSL254_A3359"/>
<dbReference type="HOGENOM" id="CLU_170994_0_0_6"/>
<dbReference type="Proteomes" id="UP000008824">
    <property type="component" value="Chromosome"/>
</dbReference>
<dbReference type="GO" id="GO:0005829">
    <property type="term" value="C:cytosol"/>
    <property type="evidence" value="ECO:0007669"/>
    <property type="project" value="TreeGrafter"/>
</dbReference>
<dbReference type="GO" id="GO:0005506">
    <property type="term" value="F:iron ion binding"/>
    <property type="evidence" value="ECO:0007669"/>
    <property type="project" value="UniProtKB-UniRule"/>
</dbReference>
<dbReference type="GO" id="GO:0034599">
    <property type="term" value="P:cellular response to oxidative stress"/>
    <property type="evidence" value="ECO:0007669"/>
    <property type="project" value="TreeGrafter"/>
</dbReference>
<dbReference type="FunFam" id="1.10.3880.10:FF:000001">
    <property type="entry name" value="Probable Fe(2+)-trafficking protein"/>
    <property type="match status" value="1"/>
</dbReference>
<dbReference type="Gene3D" id="1.10.3880.10">
    <property type="entry name" value="Fe(II) trafficking protein YggX"/>
    <property type="match status" value="1"/>
</dbReference>
<dbReference type="HAMAP" id="MF_00686">
    <property type="entry name" value="Fe_traffic_YggX"/>
    <property type="match status" value="1"/>
</dbReference>
<dbReference type="InterPro" id="IPR007457">
    <property type="entry name" value="Fe_traffick_prot_YggX"/>
</dbReference>
<dbReference type="InterPro" id="IPR036766">
    <property type="entry name" value="Fe_traffick_prot_YggX_sf"/>
</dbReference>
<dbReference type="NCBIfam" id="NF003817">
    <property type="entry name" value="PRK05408.1"/>
    <property type="match status" value="1"/>
</dbReference>
<dbReference type="PANTHER" id="PTHR36965">
    <property type="entry name" value="FE(2+)-TRAFFICKING PROTEIN-RELATED"/>
    <property type="match status" value="1"/>
</dbReference>
<dbReference type="PANTHER" id="PTHR36965:SF1">
    <property type="entry name" value="FE(2+)-TRAFFICKING PROTEIN-RELATED"/>
    <property type="match status" value="1"/>
</dbReference>
<dbReference type="Pfam" id="PF04362">
    <property type="entry name" value="Iron_traffic"/>
    <property type="match status" value="1"/>
</dbReference>
<dbReference type="PIRSF" id="PIRSF029827">
    <property type="entry name" value="Fe_traffic_YggX"/>
    <property type="match status" value="1"/>
</dbReference>
<dbReference type="SUPFAM" id="SSF111148">
    <property type="entry name" value="YggX-like"/>
    <property type="match status" value="1"/>
</dbReference>
<name>FETP_SALNS</name>
<evidence type="ECO:0000255" key="1">
    <source>
        <dbReference type="HAMAP-Rule" id="MF_00686"/>
    </source>
</evidence>
<protein>
    <recommendedName>
        <fullName evidence="1">Probable Fe(2+)-trafficking protein</fullName>
    </recommendedName>
</protein>
<accession>B4T5L9</accession>
<proteinExistence type="inferred from homology"/>
<comment type="function">
    <text evidence="1">Could be a mediator in iron transactions between iron acquisition and iron-requiring processes, such as synthesis and/or repair of Fe-S clusters in biosynthetic enzymes.</text>
</comment>
<comment type="subunit">
    <text evidence="1">Monomer.</text>
</comment>
<comment type="similarity">
    <text evidence="1">Belongs to the Fe(2+)-trafficking protein family.</text>
</comment>
<gene>
    <name evidence="1" type="primary">yggX</name>
    <name type="ordered locus">SNSL254_A3359</name>
</gene>
<keyword id="KW-0408">Iron</keyword>
<feature type="chain" id="PRO_1000131862" description="Probable Fe(2+)-trafficking protein">
    <location>
        <begin position="1"/>
        <end position="91"/>
    </location>
</feature>